<name>PNP_CAMC5</name>
<gene>
    <name evidence="1" type="primary">pnp</name>
    <name type="ordered locus">Ccur92_05170</name>
    <name type="ORF">CCV52592_0953</name>
</gene>
<protein>
    <recommendedName>
        <fullName evidence="1">Polyribonucleotide nucleotidyltransferase</fullName>
        <ecNumber evidence="1">2.7.7.8</ecNumber>
    </recommendedName>
    <alternativeName>
        <fullName evidence="1">Polynucleotide phosphorylase</fullName>
        <shortName evidence="1">PNPase</shortName>
    </alternativeName>
</protein>
<organism>
    <name type="scientific">Campylobacter curvus (strain 525.92)</name>
    <dbReference type="NCBI Taxonomy" id="360105"/>
    <lineage>
        <taxon>Bacteria</taxon>
        <taxon>Pseudomonadati</taxon>
        <taxon>Campylobacterota</taxon>
        <taxon>Epsilonproteobacteria</taxon>
        <taxon>Campylobacterales</taxon>
        <taxon>Campylobacteraceae</taxon>
        <taxon>Campylobacter</taxon>
    </lineage>
</organism>
<sequence>MQYSIEVNNQVEIFDLNKVAKQAAGAVMLRVKNTVVLATVARDDVQVEEDFLPLTVQYIEKAYAAGRIPGGYVKRETKPGDFETLTARIIDRSLRPLFPKGYAYPTQIVVMVLSADPEVDLQVVGLNAASVALYLSDIPVNRPVCGVRVGYIDDKFVINPSNSELKSSALDLYVAGTKDELLMIEMRSIAQQSSQIIPIIAIDPMMDPSLNDSITQKQDMNEFSEDRIVEAIDFAGKAILRASNAYEEAFKEHKKEDAILELKPEIENENIAIYIDKFYKNDVKNAINQMAKSERASELGKIAKQIASDEVAQKEGWEEGVISNVLGKYKKKIVREQIINEGVRADGRALDEVRPISIETNVLPNAHGSCLFTRGQTQALVVATLGTDGDAQMYDILTEKTALIEKFMFNYNFPGFSVGEASPLKAPGRRELGHGNLAKRALAPSIDINSPYTIRLVSEILESNGSSSMASVCGGALALRAAGVDTQKLVAGVAMGLIFEGDKHAVLTDIMGLEDHDGDMDFKVAGSSDGITALQMDIKLGGISLEVLKEALYQAKRGREHILNLMHQADSKIEVNEDVLPKLELFSVDPSKIVDIIGQAGKTIKEIIERFEVSIDLDREKGEVKIAGGAKKNVDAAKDYIISITSKENSRGFGKKPHGHDRRDKDRQKPTFNIGDEFDGVVKSVVDFGAFIELKDGVDGLLHISKIKTPLNVGDRLKVCVSEQKGNKISLSLVE</sequence>
<comment type="function">
    <text evidence="1">Involved in mRNA degradation. Catalyzes the phosphorolysis of single-stranded polyribonucleotides processively in the 3'- to 5'-direction.</text>
</comment>
<comment type="catalytic activity">
    <reaction evidence="1">
        <text>RNA(n+1) + phosphate = RNA(n) + a ribonucleoside 5'-diphosphate</text>
        <dbReference type="Rhea" id="RHEA:22096"/>
        <dbReference type="Rhea" id="RHEA-COMP:14527"/>
        <dbReference type="Rhea" id="RHEA-COMP:17342"/>
        <dbReference type="ChEBI" id="CHEBI:43474"/>
        <dbReference type="ChEBI" id="CHEBI:57930"/>
        <dbReference type="ChEBI" id="CHEBI:140395"/>
        <dbReference type="EC" id="2.7.7.8"/>
    </reaction>
</comment>
<comment type="cofactor">
    <cofactor evidence="1">
        <name>Mg(2+)</name>
        <dbReference type="ChEBI" id="CHEBI:18420"/>
    </cofactor>
</comment>
<comment type="subcellular location">
    <subcellularLocation>
        <location evidence="1">Cytoplasm</location>
    </subcellularLocation>
</comment>
<comment type="similarity">
    <text evidence="1">Belongs to the polyribonucleotide nucleotidyltransferase family.</text>
</comment>
<evidence type="ECO:0000255" key="1">
    <source>
        <dbReference type="HAMAP-Rule" id="MF_01595"/>
    </source>
</evidence>
<evidence type="ECO:0000256" key="2">
    <source>
        <dbReference type="SAM" id="MobiDB-lite"/>
    </source>
</evidence>
<feature type="chain" id="PRO_0000329568" description="Polyribonucleotide nucleotidyltransferase">
    <location>
        <begin position="1"/>
        <end position="735"/>
    </location>
</feature>
<feature type="domain" description="KH" evidence="1">
    <location>
        <begin position="581"/>
        <end position="641"/>
    </location>
</feature>
<feature type="domain" description="S1 motif" evidence="1">
    <location>
        <begin position="675"/>
        <end position="734"/>
    </location>
</feature>
<feature type="region of interest" description="Disordered" evidence="2">
    <location>
        <begin position="649"/>
        <end position="671"/>
    </location>
</feature>
<feature type="binding site" evidence="1">
    <location>
        <position position="515"/>
    </location>
    <ligand>
        <name>Mg(2+)</name>
        <dbReference type="ChEBI" id="CHEBI:18420"/>
    </ligand>
</feature>
<feature type="binding site" evidence="1">
    <location>
        <position position="521"/>
    </location>
    <ligand>
        <name>Mg(2+)</name>
        <dbReference type="ChEBI" id="CHEBI:18420"/>
    </ligand>
</feature>
<proteinExistence type="inferred from homology"/>
<accession>A7GX79</accession>
<keyword id="KW-0963">Cytoplasm</keyword>
<keyword id="KW-0460">Magnesium</keyword>
<keyword id="KW-0479">Metal-binding</keyword>
<keyword id="KW-0548">Nucleotidyltransferase</keyword>
<keyword id="KW-1185">Reference proteome</keyword>
<keyword id="KW-0694">RNA-binding</keyword>
<keyword id="KW-0808">Transferase</keyword>
<reference key="1">
    <citation type="submission" date="2007-07" db="EMBL/GenBank/DDBJ databases">
        <title>Genome sequence of Campylobacter curvus 525.92 isolated from human feces.</title>
        <authorList>
            <person name="Fouts D.E."/>
            <person name="Mongodin E.F."/>
            <person name="Puiu D."/>
            <person name="Sebastian Y."/>
            <person name="Miller W.G."/>
            <person name="Mandrell R.E."/>
            <person name="Lastovica A.J."/>
            <person name="Nelson K.E."/>
        </authorList>
    </citation>
    <scope>NUCLEOTIDE SEQUENCE [LARGE SCALE GENOMIC DNA]</scope>
    <source>
        <strain>525.92</strain>
    </source>
</reference>
<dbReference type="EC" id="2.7.7.8" evidence="1"/>
<dbReference type="EMBL" id="CP000767">
    <property type="protein sequence ID" value="EAU00019.1"/>
    <property type="molecule type" value="Genomic_DNA"/>
</dbReference>
<dbReference type="RefSeq" id="WP_011992002.1">
    <property type="nucleotide sequence ID" value="NC_009715.2"/>
</dbReference>
<dbReference type="SMR" id="A7GX79"/>
<dbReference type="STRING" id="360105.CCV52592_0953"/>
<dbReference type="KEGG" id="ccv:CCV52592_0953"/>
<dbReference type="HOGENOM" id="CLU_004217_2_2_7"/>
<dbReference type="OrthoDB" id="9804305at2"/>
<dbReference type="Proteomes" id="UP000006380">
    <property type="component" value="Chromosome"/>
</dbReference>
<dbReference type="GO" id="GO:0005829">
    <property type="term" value="C:cytosol"/>
    <property type="evidence" value="ECO:0007669"/>
    <property type="project" value="TreeGrafter"/>
</dbReference>
<dbReference type="GO" id="GO:0000175">
    <property type="term" value="F:3'-5'-RNA exonuclease activity"/>
    <property type="evidence" value="ECO:0007669"/>
    <property type="project" value="TreeGrafter"/>
</dbReference>
<dbReference type="GO" id="GO:0000287">
    <property type="term" value="F:magnesium ion binding"/>
    <property type="evidence" value="ECO:0007669"/>
    <property type="project" value="UniProtKB-UniRule"/>
</dbReference>
<dbReference type="GO" id="GO:0004654">
    <property type="term" value="F:polyribonucleotide nucleotidyltransferase activity"/>
    <property type="evidence" value="ECO:0007669"/>
    <property type="project" value="UniProtKB-UniRule"/>
</dbReference>
<dbReference type="GO" id="GO:0003723">
    <property type="term" value="F:RNA binding"/>
    <property type="evidence" value="ECO:0007669"/>
    <property type="project" value="UniProtKB-UniRule"/>
</dbReference>
<dbReference type="GO" id="GO:0006402">
    <property type="term" value="P:mRNA catabolic process"/>
    <property type="evidence" value="ECO:0007669"/>
    <property type="project" value="UniProtKB-UniRule"/>
</dbReference>
<dbReference type="GO" id="GO:0006396">
    <property type="term" value="P:RNA processing"/>
    <property type="evidence" value="ECO:0007669"/>
    <property type="project" value="InterPro"/>
</dbReference>
<dbReference type="CDD" id="cd02393">
    <property type="entry name" value="KH-I_PNPase"/>
    <property type="match status" value="1"/>
</dbReference>
<dbReference type="CDD" id="cd11364">
    <property type="entry name" value="RNase_PH_PNPase_2"/>
    <property type="match status" value="1"/>
</dbReference>
<dbReference type="FunFam" id="3.30.1370.10:FF:000001">
    <property type="entry name" value="Polyribonucleotide nucleotidyltransferase"/>
    <property type="match status" value="1"/>
</dbReference>
<dbReference type="FunFam" id="3.30.230.70:FF:000026">
    <property type="entry name" value="Polyribonucleotide nucleotidyltransferase"/>
    <property type="match status" value="1"/>
</dbReference>
<dbReference type="FunFam" id="3.30.230.70:FF:000029">
    <property type="entry name" value="Polyribonucleotide nucleotidyltransferase"/>
    <property type="match status" value="1"/>
</dbReference>
<dbReference type="Gene3D" id="3.30.230.70">
    <property type="entry name" value="GHMP Kinase, N-terminal domain"/>
    <property type="match status" value="2"/>
</dbReference>
<dbReference type="Gene3D" id="3.30.1370.10">
    <property type="entry name" value="K Homology domain, type 1"/>
    <property type="match status" value="1"/>
</dbReference>
<dbReference type="Gene3D" id="2.40.50.140">
    <property type="entry name" value="Nucleic acid-binding proteins"/>
    <property type="match status" value="1"/>
</dbReference>
<dbReference type="HAMAP" id="MF_01595">
    <property type="entry name" value="PNPase"/>
    <property type="match status" value="1"/>
</dbReference>
<dbReference type="InterPro" id="IPR001247">
    <property type="entry name" value="ExoRNase_PH_dom1"/>
</dbReference>
<dbReference type="InterPro" id="IPR015847">
    <property type="entry name" value="ExoRNase_PH_dom2"/>
</dbReference>
<dbReference type="InterPro" id="IPR036345">
    <property type="entry name" value="ExoRNase_PH_dom2_sf"/>
</dbReference>
<dbReference type="InterPro" id="IPR004087">
    <property type="entry name" value="KH_dom"/>
</dbReference>
<dbReference type="InterPro" id="IPR004088">
    <property type="entry name" value="KH_dom_type_1"/>
</dbReference>
<dbReference type="InterPro" id="IPR036612">
    <property type="entry name" value="KH_dom_type_1_sf"/>
</dbReference>
<dbReference type="InterPro" id="IPR012340">
    <property type="entry name" value="NA-bd_OB-fold"/>
</dbReference>
<dbReference type="InterPro" id="IPR012162">
    <property type="entry name" value="PNPase"/>
</dbReference>
<dbReference type="InterPro" id="IPR027408">
    <property type="entry name" value="PNPase/RNase_PH_dom_sf"/>
</dbReference>
<dbReference type="InterPro" id="IPR015848">
    <property type="entry name" value="PNPase_PH_RNA-bd_bac/org-type"/>
</dbReference>
<dbReference type="InterPro" id="IPR020568">
    <property type="entry name" value="Ribosomal_Su5_D2-typ_SF"/>
</dbReference>
<dbReference type="InterPro" id="IPR003029">
    <property type="entry name" value="S1_domain"/>
</dbReference>
<dbReference type="NCBIfam" id="NF008805">
    <property type="entry name" value="PRK11824.1"/>
    <property type="match status" value="1"/>
</dbReference>
<dbReference type="PANTHER" id="PTHR11252">
    <property type="entry name" value="POLYRIBONUCLEOTIDE NUCLEOTIDYLTRANSFERASE"/>
    <property type="match status" value="1"/>
</dbReference>
<dbReference type="PANTHER" id="PTHR11252:SF0">
    <property type="entry name" value="POLYRIBONUCLEOTIDE NUCLEOTIDYLTRANSFERASE 1, MITOCHONDRIAL"/>
    <property type="match status" value="1"/>
</dbReference>
<dbReference type="Pfam" id="PF00013">
    <property type="entry name" value="KH_1"/>
    <property type="match status" value="1"/>
</dbReference>
<dbReference type="Pfam" id="PF03726">
    <property type="entry name" value="PNPase"/>
    <property type="match status" value="1"/>
</dbReference>
<dbReference type="Pfam" id="PF01138">
    <property type="entry name" value="RNase_PH"/>
    <property type="match status" value="2"/>
</dbReference>
<dbReference type="Pfam" id="PF03725">
    <property type="entry name" value="RNase_PH_C"/>
    <property type="match status" value="2"/>
</dbReference>
<dbReference type="Pfam" id="PF00575">
    <property type="entry name" value="S1"/>
    <property type="match status" value="1"/>
</dbReference>
<dbReference type="PIRSF" id="PIRSF005499">
    <property type="entry name" value="PNPase"/>
    <property type="match status" value="1"/>
</dbReference>
<dbReference type="SMART" id="SM00322">
    <property type="entry name" value="KH"/>
    <property type="match status" value="1"/>
</dbReference>
<dbReference type="SMART" id="SM00316">
    <property type="entry name" value="S1"/>
    <property type="match status" value="1"/>
</dbReference>
<dbReference type="SUPFAM" id="SSF54791">
    <property type="entry name" value="Eukaryotic type KH-domain (KH-domain type I)"/>
    <property type="match status" value="1"/>
</dbReference>
<dbReference type="SUPFAM" id="SSF50249">
    <property type="entry name" value="Nucleic acid-binding proteins"/>
    <property type="match status" value="1"/>
</dbReference>
<dbReference type="SUPFAM" id="SSF55666">
    <property type="entry name" value="Ribonuclease PH domain 2-like"/>
    <property type="match status" value="2"/>
</dbReference>
<dbReference type="SUPFAM" id="SSF54211">
    <property type="entry name" value="Ribosomal protein S5 domain 2-like"/>
    <property type="match status" value="2"/>
</dbReference>
<dbReference type="PROSITE" id="PS50084">
    <property type="entry name" value="KH_TYPE_1"/>
    <property type="match status" value="1"/>
</dbReference>
<dbReference type="PROSITE" id="PS50126">
    <property type="entry name" value="S1"/>
    <property type="match status" value="1"/>
</dbReference>